<keyword id="KW-0067">ATP-binding</keyword>
<keyword id="KW-0997">Cell inner membrane</keyword>
<keyword id="KW-1003">Cell membrane</keyword>
<keyword id="KW-0186">Copper</keyword>
<keyword id="KW-0187">Copper transport</keyword>
<keyword id="KW-0963">Cytoplasm</keyword>
<keyword id="KW-0406">Ion transport</keyword>
<keyword id="KW-0460">Magnesium</keyword>
<keyword id="KW-0472">Membrane</keyword>
<keyword id="KW-0479">Metal-binding</keyword>
<keyword id="KW-0547">Nucleotide-binding</keyword>
<keyword id="KW-0597">Phosphoprotein</keyword>
<keyword id="KW-1185">Reference proteome</keyword>
<keyword id="KW-0677">Repeat</keyword>
<keyword id="KW-0688">Ribosomal frameshifting</keyword>
<keyword id="KW-1278">Translocase</keyword>
<keyword id="KW-0812">Transmembrane</keyword>
<keyword id="KW-1133">Transmembrane helix</keyword>
<keyword id="KW-0813">Transport</keyword>
<dbReference type="EC" id="7.2.2.8"/>
<dbReference type="EMBL" id="AE006468">
    <property type="protein sequence ID" value="AAL19452.1"/>
    <property type="molecule type" value="Genomic_DNA"/>
</dbReference>
<dbReference type="RefSeq" id="NP_459493.1">
    <molecule id="Q8ZR95-1"/>
    <property type="nucleotide sequence ID" value="NC_003197.2"/>
</dbReference>
<dbReference type="RefSeq" id="WP_000083899.1">
    <property type="nucleotide sequence ID" value="NC_003197.2"/>
</dbReference>
<dbReference type="SMR" id="Q8ZR95"/>
<dbReference type="STRING" id="99287.STM0498"/>
<dbReference type="PaxDb" id="99287-STM0498"/>
<dbReference type="GeneID" id="1252018"/>
<dbReference type="KEGG" id="stm:STM0498"/>
<dbReference type="PATRIC" id="fig|99287.12.peg.532"/>
<dbReference type="HOGENOM" id="CLU_001771_0_3_6"/>
<dbReference type="OMA" id="HWMLPAW"/>
<dbReference type="PhylomeDB" id="Q8ZR95"/>
<dbReference type="BioCyc" id="SENT99287:STM0498-MONOMER"/>
<dbReference type="Proteomes" id="UP000001014">
    <property type="component" value="Chromosome"/>
</dbReference>
<dbReference type="GO" id="GO:0005737">
    <property type="term" value="C:cytoplasm"/>
    <property type="evidence" value="ECO:0007669"/>
    <property type="project" value="UniProtKB-SubCell"/>
</dbReference>
<dbReference type="GO" id="GO:0016020">
    <property type="term" value="C:membrane"/>
    <property type="evidence" value="ECO:0000318"/>
    <property type="project" value="GO_Central"/>
</dbReference>
<dbReference type="GO" id="GO:0005886">
    <property type="term" value="C:plasma membrane"/>
    <property type="evidence" value="ECO:0007669"/>
    <property type="project" value="UniProtKB-SubCell"/>
</dbReference>
<dbReference type="GO" id="GO:0005524">
    <property type="term" value="F:ATP binding"/>
    <property type="evidence" value="ECO:0007669"/>
    <property type="project" value="UniProtKB-KW"/>
</dbReference>
<dbReference type="GO" id="GO:0016887">
    <property type="term" value="F:ATP hydrolysis activity"/>
    <property type="evidence" value="ECO:0007669"/>
    <property type="project" value="InterPro"/>
</dbReference>
<dbReference type="GO" id="GO:0005507">
    <property type="term" value="F:copper ion binding"/>
    <property type="evidence" value="ECO:0000318"/>
    <property type="project" value="GO_Central"/>
</dbReference>
<dbReference type="GO" id="GO:0043682">
    <property type="term" value="F:P-type divalent copper transporter activity"/>
    <property type="evidence" value="ECO:0000318"/>
    <property type="project" value="GO_Central"/>
</dbReference>
<dbReference type="GO" id="GO:0140581">
    <property type="term" value="F:P-type monovalent copper transporter activity"/>
    <property type="evidence" value="ECO:0007669"/>
    <property type="project" value="UniProtKB-EC"/>
</dbReference>
<dbReference type="GO" id="GO:0055070">
    <property type="term" value="P:copper ion homeostasis"/>
    <property type="evidence" value="ECO:0000318"/>
    <property type="project" value="GO_Central"/>
</dbReference>
<dbReference type="GO" id="GO:0075523">
    <property type="term" value="P:viral translational frameshifting"/>
    <property type="evidence" value="ECO:0007669"/>
    <property type="project" value="UniProtKB-KW"/>
</dbReference>
<dbReference type="CDD" id="cd00371">
    <property type="entry name" value="HMA"/>
    <property type="match status" value="2"/>
</dbReference>
<dbReference type="CDD" id="cd02094">
    <property type="entry name" value="P-type_ATPase_Cu-like"/>
    <property type="match status" value="1"/>
</dbReference>
<dbReference type="FunFam" id="3.30.70.100:FF:000030">
    <property type="entry name" value="Copper-exporting P-type ATPase"/>
    <property type="match status" value="1"/>
</dbReference>
<dbReference type="FunFam" id="3.30.70.100:FF:000032">
    <property type="entry name" value="Copper-exporting P-type ATPase"/>
    <property type="match status" value="1"/>
</dbReference>
<dbReference type="FunFam" id="3.40.1110.10:FF:000036">
    <property type="entry name" value="Copper-exporting P-type ATPase"/>
    <property type="match status" value="1"/>
</dbReference>
<dbReference type="FunFam" id="2.70.150.10:FF:000020">
    <property type="entry name" value="Copper-exporting P-type ATPase A"/>
    <property type="match status" value="1"/>
</dbReference>
<dbReference type="Gene3D" id="3.30.70.100">
    <property type="match status" value="2"/>
</dbReference>
<dbReference type="Gene3D" id="3.40.1110.10">
    <property type="entry name" value="Calcium-transporting ATPase, cytoplasmic domain N"/>
    <property type="match status" value="1"/>
</dbReference>
<dbReference type="Gene3D" id="2.70.150.10">
    <property type="entry name" value="Calcium-transporting ATPase, cytoplasmic transduction domain A"/>
    <property type="match status" value="1"/>
</dbReference>
<dbReference type="Gene3D" id="3.40.50.1000">
    <property type="entry name" value="HAD superfamily/HAD-like"/>
    <property type="match status" value="1"/>
</dbReference>
<dbReference type="InterPro" id="IPR023299">
    <property type="entry name" value="ATPase_P-typ_cyto_dom_N"/>
</dbReference>
<dbReference type="InterPro" id="IPR018303">
    <property type="entry name" value="ATPase_P-typ_P_site"/>
</dbReference>
<dbReference type="InterPro" id="IPR023298">
    <property type="entry name" value="ATPase_P-typ_TM_dom_sf"/>
</dbReference>
<dbReference type="InterPro" id="IPR008250">
    <property type="entry name" value="ATPase_P-typ_transduc_dom_A_sf"/>
</dbReference>
<dbReference type="InterPro" id="IPR036412">
    <property type="entry name" value="HAD-like_sf"/>
</dbReference>
<dbReference type="InterPro" id="IPR023214">
    <property type="entry name" value="HAD_sf"/>
</dbReference>
<dbReference type="InterPro" id="IPR017969">
    <property type="entry name" value="Heavy-metal-associated_CS"/>
</dbReference>
<dbReference type="InterPro" id="IPR006121">
    <property type="entry name" value="HMA_dom"/>
</dbReference>
<dbReference type="InterPro" id="IPR036163">
    <property type="entry name" value="HMA_dom_sf"/>
</dbReference>
<dbReference type="InterPro" id="IPR027256">
    <property type="entry name" value="P-typ_ATPase_IB"/>
</dbReference>
<dbReference type="InterPro" id="IPR001757">
    <property type="entry name" value="P_typ_ATPase"/>
</dbReference>
<dbReference type="InterPro" id="IPR044492">
    <property type="entry name" value="P_typ_ATPase_HD_dom"/>
</dbReference>
<dbReference type="NCBIfam" id="TIGR01511">
    <property type="entry name" value="ATPase-IB1_Cu"/>
    <property type="match status" value="1"/>
</dbReference>
<dbReference type="NCBIfam" id="TIGR01525">
    <property type="entry name" value="ATPase-IB_hvy"/>
    <property type="match status" value="1"/>
</dbReference>
<dbReference type="NCBIfam" id="TIGR01494">
    <property type="entry name" value="ATPase_P-type"/>
    <property type="match status" value="1"/>
</dbReference>
<dbReference type="NCBIfam" id="NF007952">
    <property type="entry name" value="PRK10671.1"/>
    <property type="match status" value="1"/>
</dbReference>
<dbReference type="PANTHER" id="PTHR43520">
    <property type="entry name" value="ATP7, ISOFORM B"/>
    <property type="match status" value="1"/>
</dbReference>
<dbReference type="PANTHER" id="PTHR43520:SF6">
    <property type="entry name" value="COPPER-EXPORTING P-TYPE ATPASE"/>
    <property type="match status" value="1"/>
</dbReference>
<dbReference type="Pfam" id="PF00122">
    <property type="entry name" value="E1-E2_ATPase"/>
    <property type="match status" value="1"/>
</dbReference>
<dbReference type="Pfam" id="PF00403">
    <property type="entry name" value="HMA"/>
    <property type="match status" value="2"/>
</dbReference>
<dbReference type="Pfam" id="PF00702">
    <property type="entry name" value="Hydrolase"/>
    <property type="match status" value="1"/>
</dbReference>
<dbReference type="PRINTS" id="PR00119">
    <property type="entry name" value="CATATPASE"/>
</dbReference>
<dbReference type="PRINTS" id="PR00120">
    <property type="entry name" value="HATPASE"/>
</dbReference>
<dbReference type="SFLD" id="SFLDS00003">
    <property type="entry name" value="Haloacid_Dehalogenase"/>
    <property type="match status" value="1"/>
</dbReference>
<dbReference type="SFLD" id="SFLDF00027">
    <property type="entry name" value="p-type_atpase"/>
    <property type="match status" value="1"/>
</dbReference>
<dbReference type="SUPFAM" id="SSF81653">
    <property type="entry name" value="Calcium ATPase, transduction domain A"/>
    <property type="match status" value="1"/>
</dbReference>
<dbReference type="SUPFAM" id="SSF81665">
    <property type="entry name" value="Calcium ATPase, transmembrane domain M"/>
    <property type="match status" value="1"/>
</dbReference>
<dbReference type="SUPFAM" id="SSF56784">
    <property type="entry name" value="HAD-like"/>
    <property type="match status" value="1"/>
</dbReference>
<dbReference type="SUPFAM" id="SSF55008">
    <property type="entry name" value="HMA, heavy metal-associated domain"/>
    <property type="match status" value="2"/>
</dbReference>
<dbReference type="PROSITE" id="PS00154">
    <property type="entry name" value="ATPASE_E1_E2"/>
    <property type="match status" value="1"/>
</dbReference>
<dbReference type="PROSITE" id="PS01047">
    <property type="entry name" value="HMA_1"/>
    <property type="match status" value="2"/>
</dbReference>
<dbReference type="PROSITE" id="PS50846">
    <property type="entry name" value="HMA_2"/>
    <property type="match status" value="2"/>
</dbReference>
<comment type="function">
    <molecule>Copper-exporting P-type ATPase</molecule>
    <text evidence="2 5">Involved in Cu(+) export (By similarity). Essential for copper tolerance under both aerobic and anaerobic conditions (PubMed:17768242).</text>
</comment>
<comment type="function">
    <molecule>Isoform Soluble copper chaperone CopA(Z)</molecule>
    <text evidence="2 7">Probably also encodes a cytoplasmic copper chaperone CopA(Z) that is produced by programmed ribosomal frameshifting (Probable).</text>
</comment>
<comment type="catalytic activity">
    <reaction>
        <text>Cu(+)(in) + ATP + H2O = Cu(+)(out) + ADP + phosphate + H(+)</text>
        <dbReference type="Rhea" id="RHEA:25792"/>
        <dbReference type="ChEBI" id="CHEBI:15377"/>
        <dbReference type="ChEBI" id="CHEBI:15378"/>
        <dbReference type="ChEBI" id="CHEBI:30616"/>
        <dbReference type="ChEBI" id="CHEBI:43474"/>
        <dbReference type="ChEBI" id="CHEBI:49552"/>
        <dbReference type="ChEBI" id="CHEBI:456216"/>
        <dbReference type="EC" id="7.2.2.8"/>
    </reaction>
</comment>
<comment type="subcellular location">
    <molecule>Copper-exporting P-type ATPase</molecule>
    <subcellularLocation>
        <location evidence="2">Cell inner membrane</location>
        <topology evidence="2">Multi-pass membrane protein</topology>
    </subcellularLocation>
</comment>
<comment type="subcellular location">
    <molecule>Isoform Soluble copper chaperone CopA(Z)</molecule>
    <subcellularLocation>
        <location evidence="2">Cytoplasm</location>
    </subcellularLocation>
</comment>
<comment type="alternative products">
    <event type="ribosomal frameshifting"/>
    <isoform>
        <id>Q8ZR95-1</id>
        <name>Copper-exporting P-type ATPase A</name>
        <sequence type="displayed"/>
    </isoform>
    <isoform>
        <id>Q8ZR95-2</id>
        <name>Soluble copper chaperone CopA(Z)</name>
        <sequence type="described" ref="VSP_059179"/>
    </isoform>
</comment>
<comment type="induction">
    <text evidence="5">Transcriptionally up-regulated by CueR in response to copper ions.</text>
</comment>
<comment type="disruption phenotype">
    <text evidence="5">Causes a mild defect in aerobic growth on CuSO(4), strongly impairs survival during anaerobic growth on CuSO(4).</text>
</comment>
<comment type="miscellaneous">
    <molecule>Isoform Soluble copper chaperone CopA(Z)</molecule>
    <text evidence="2 7">Expression of the CopA(Z) soluble copper chaperone isoform requires a -1 programmed ribosomal frameshift (PRF) at the 70th codon. A nucleotide 'slippery sequence' that promotes PRF is found just downstream of the frameshifted site.</text>
</comment>
<comment type="similarity">
    <text evidence="6">Belongs to the cation transport ATPase (P-type) (TC 3.A.3) family. Type IB subfamily.</text>
</comment>
<organism>
    <name type="scientific">Salmonella typhimurium (strain LT2 / SGSC1412 / ATCC 700720)</name>
    <dbReference type="NCBI Taxonomy" id="99287"/>
    <lineage>
        <taxon>Bacteria</taxon>
        <taxon>Pseudomonadati</taxon>
        <taxon>Pseudomonadota</taxon>
        <taxon>Gammaproteobacteria</taxon>
        <taxon>Enterobacterales</taxon>
        <taxon>Enterobacteriaceae</taxon>
        <taxon>Salmonella</taxon>
    </lineage>
</organism>
<reference key="1">
    <citation type="journal article" date="2001" name="Nature">
        <title>Complete genome sequence of Salmonella enterica serovar Typhimurium LT2.</title>
        <authorList>
            <person name="McClelland M."/>
            <person name="Sanderson K.E."/>
            <person name="Spieth J."/>
            <person name="Clifton S.W."/>
            <person name="Latreille P."/>
            <person name="Courtney L."/>
            <person name="Porwollik S."/>
            <person name="Ali J."/>
            <person name="Dante M."/>
            <person name="Du F."/>
            <person name="Hou S."/>
            <person name="Layman D."/>
            <person name="Leonard S."/>
            <person name="Nguyen C."/>
            <person name="Scott K."/>
            <person name="Holmes A."/>
            <person name="Grewal N."/>
            <person name="Mulvaney E."/>
            <person name="Ryan E."/>
            <person name="Sun H."/>
            <person name="Florea L."/>
            <person name="Miller W."/>
            <person name="Stoneking T."/>
            <person name="Nhan M."/>
            <person name="Waterston R."/>
            <person name="Wilson R.K."/>
        </authorList>
    </citation>
    <scope>NUCLEOTIDE SEQUENCE [LARGE SCALE GENOMIC DNA]</scope>
    <source>
        <strain>LT2 / SGSC1412 / ATCC 700720</strain>
    </source>
</reference>
<reference key="2">
    <citation type="journal article" date="2007" name="Microbiology">
        <title>Dissecting the Salmonella response to copper.</title>
        <authorList>
            <person name="Espariz M."/>
            <person name="Checa S.K."/>
            <person name="Perez Audero M.E."/>
            <person name="Pontel L.B."/>
            <person name="Soncini F.C."/>
        </authorList>
    </citation>
    <scope>FUNCTION IN COPPER TOLERANCE</scope>
    <scope>REGULATION BY CUER</scope>
    <scope>INDUCTION BY COPPER</scope>
    <scope>DISRUPTION PHENOTYPE</scope>
    <source>
        <strain>ATCC 14028s / SGSG 2262</strain>
    </source>
</reference>
<reference key="3">
    <citation type="journal article" date="2017" name="Mol. Cell">
        <title>Programmed ribosomal frameshifting generates a copper transporter and a copper chaperone from the same gene.</title>
        <authorList>
            <person name="Meydan S."/>
            <person name="Klepacki D."/>
            <person name="Karthikeyan S."/>
            <person name="Margus T."/>
            <person name="Thomas P."/>
            <person name="Jones J.E."/>
            <person name="Khan Y."/>
            <person name="Briggs J."/>
            <person name="Dinman J.D."/>
            <person name="Vazquez-Laslop N."/>
            <person name="Mankin A.S."/>
        </authorList>
    </citation>
    <scope>POSSIBLE RIBOSOMAL FRAMESHIFT TO TRANSLATE ISOFORM SOLUBLE COPPER CHAPERONE COPA(Z)</scope>
</reference>
<gene>
    <name type="primary">copA</name>
    <name type="ordered locus">STM0498</name>
</gene>
<feature type="initiator methionine" description="Removed" evidence="1">
    <location>
        <position position="1"/>
    </location>
</feature>
<feature type="chain" id="PRO_0000046323" description="Copper-exporting P-type ATPase">
    <location>
        <begin position="2"/>
        <end position="833"/>
    </location>
</feature>
<feature type="transmembrane region" description="Helical" evidence="3">
    <location>
        <begin position="186"/>
        <end position="206"/>
    </location>
</feature>
<feature type="transmembrane region" description="Helical" evidence="3">
    <location>
        <begin position="217"/>
        <end position="237"/>
    </location>
</feature>
<feature type="transmembrane region" description="Helical" evidence="3">
    <location>
        <begin position="253"/>
        <end position="273"/>
    </location>
</feature>
<feature type="transmembrane region" description="Helical" evidence="3">
    <location>
        <begin position="283"/>
        <end position="303"/>
    </location>
</feature>
<feature type="transmembrane region" description="Helical" evidence="3">
    <location>
        <begin position="437"/>
        <end position="457"/>
    </location>
</feature>
<feature type="transmembrane region" description="Helical" evidence="3">
    <location>
        <begin position="463"/>
        <end position="483"/>
    </location>
</feature>
<feature type="transmembrane region" description="Helical" evidence="3">
    <location>
        <begin position="778"/>
        <end position="798"/>
    </location>
</feature>
<feature type="transmembrane region" description="Helical" evidence="3">
    <location>
        <begin position="800"/>
        <end position="820"/>
    </location>
</feature>
<feature type="domain" description="HMA 1" evidence="4">
    <location>
        <begin position="3"/>
        <end position="64"/>
    </location>
</feature>
<feature type="domain" description="HMA 2" evidence="4">
    <location>
        <begin position="98"/>
        <end position="161"/>
    </location>
</feature>
<feature type="active site" description="4-aspartylphosphate intermediate" evidence="6">
    <location>
        <position position="522"/>
    </location>
</feature>
<feature type="binding site" evidence="4">
    <location>
        <position position="14"/>
    </location>
    <ligand>
        <name>Cu(+)</name>
        <dbReference type="ChEBI" id="CHEBI:49552"/>
        <label>1</label>
    </ligand>
</feature>
<feature type="binding site" evidence="4">
    <location>
        <position position="17"/>
    </location>
    <ligand>
        <name>Cu(+)</name>
        <dbReference type="ChEBI" id="CHEBI:49552"/>
        <label>1</label>
    </ligand>
</feature>
<feature type="binding site" evidence="4">
    <location>
        <position position="109"/>
    </location>
    <ligand>
        <name>Cu(+)</name>
        <dbReference type="ChEBI" id="CHEBI:49552"/>
        <label>2</label>
    </ligand>
</feature>
<feature type="binding site" evidence="4">
    <location>
        <position position="112"/>
    </location>
    <ligand>
        <name>Cu(+)</name>
        <dbReference type="ChEBI" id="CHEBI:49552"/>
        <label>2</label>
    </ligand>
</feature>
<feature type="binding site">
    <location>
        <position position="719"/>
    </location>
    <ligand>
        <name>Mg(2+)</name>
        <dbReference type="ChEBI" id="CHEBI:18420"/>
    </ligand>
</feature>
<feature type="binding site">
    <location>
        <position position="723"/>
    </location>
    <ligand>
        <name>Mg(2+)</name>
        <dbReference type="ChEBI" id="CHEBI:18420"/>
    </ligand>
</feature>
<feature type="splice variant" id="VSP_059179" description="In isoform Soluble copper chaperone CopA(Z)." evidence="7">
    <original>AKPLTESSIPSEALAAVPHELPVATADEESQQLLLSGMSCASCVTRVQHALQSVPGVTQARVNLAERTALVMGSASAADLVQAVEKAGYGAEAIEDDIKRRERQQETAIATMKRFRWQAIVALAVGIPVMVWGMIGDNMMVTDDNRSLWLAIGLITLAVMVFAGGHFYRNAWKSLLNGTATMDTLVALGTGVAWLYSMSVNLWPQWFPMEARHLYYEASAMIIGLINLGHMLEARARQRSSKALEKLLDLTPPTARVVTEDGEKSVPLADVQPGMLLRLTTGDRVPVDGEITQGEAWLDEAMLTGEPIPQQKGEGDSVHAGTVVQDGSVLFRASAVGSHTTLSRIIRMVRQAQSSKPEIGQLADKISAVFVPVVVAIALFSAAIWYFFGPAPQIVYTLVIATTVLIIACPCALGLATPMSIISGVGRAAEFGVLVRDADALQRASTLDTLVFDKTGTLTEGKPQVVAIKTFNGVEEAQALRLAAALEQGSSHPLAHAILEKAGDDKLPQVNGFRTLRGLGVSGEAEGHQLLLGNQALLNEQHVATDDMTAEITAQASQGSTPVLLAIDGKAAALLAVRDPLRSDSIAALERLHNAGYRLVMLTGDNPTTANAIAKEAGIDEVIAGVLPDGKADAIKRLQSQGRQVAMVGDGINDAPALAQADVGIAMGGGSDVAIETAAITLMRHSLMGVADALAISRATLRNMKQNLLGAFIYNSIGIPVAAGILWPFTGTLLNPVVAGAAMALSSITVVSNANRLLRFKPKA</original>
    <variation>G</variation>
    <location>
        <begin position="70"/>
        <end position="833"/>
    </location>
</feature>
<evidence type="ECO:0000250" key="1"/>
<evidence type="ECO:0000250" key="2">
    <source>
        <dbReference type="UniProtKB" id="Q59385"/>
    </source>
</evidence>
<evidence type="ECO:0000255" key="3"/>
<evidence type="ECO:0000255" key="4">
    <source>
        <dbReference type="PROSITE-ProRule" id="PRU00280"/>
    </source>
</evidence>
<evidence type="ECO:0000269" key="5">
    <source>
    </source>
</evidence>
<evidence type="ECO:0000305" key="6"/>
<evidence type="ECO:0000305" key="7">
    <source>
    </source>
</evidence>
<name>COPA_SALTY</name>
<accession>Q8ZR95</accession>
<sequence length="833" mass="87910">MSQTIDLTLDGLSCGHCVKRVKESLEQRPDVELADVTVTEAHVTGTASADALIETIKQAGYGATLSHPKAKPLTESSIPSEALAAVPHELPVATADEESQQLLLSGMSCASCVTRVQHALQSVPGVTQARVNLAERTALVMGSASAADLVQAVEKAGYGAEAIEDDIKRRERQQETAIATMKRFRWQAIVALAVGIPVMVWGMIGDNMMVTDDNRSLWLAIGLITLAVMVFAGGHFYRNAWKSLLNGTATMDTLVALGTGVAWLYSMSVNLWPQWFPMEARHLYYEASAMIIGLINLGHMLEARARQRSSKALEKLLDLTPPTARVVTEDGEKSVPLADVQPGMLLRLTTGDRVPVDGEITQGEAWLDEAMLTGEPIPQQKGEGDSVHAGTVVQDGSVLFRASAVGSHTTLSRIIRMVRQAQSSKPEIGQLADKISAVFVPVVVAIALFSAAIWYFFGPAPQIVYTLVIATTVLIIACPCALGLATPMSIISGVGRAAEFGVLVRDADALQRASTLDTLVFDKTGTLTEGKPQVVAIKTFNGVEEAQALRLAAALEQGSSHPLAHAILEKAGDDKLPQVNGFRTLRGLGVSGEAEGHQLLLGNQALLNEQHVATDDMTAEITAQASQGSTPVLLAIDGKAAALLAVRDPLRSDSIAALERLHNAGYRLVMLTGDNPTTANAIAKEAGIDEVIAGVLPDGKADAIKRLQSQGRQVAMVGDGINDAPALAQADVGIAMGGGSDVAIETAAITLMRHSLMGVADALAISRATLRNMKQNLLGAFIYNSIGIPVAAGILWPFTGTLLNPVVAGAAMALSSITVVSNANRLLRFKPKA</sequence>
<protein>
    <recommendedName>
        <fullName>Copper-exporting P-type ATPase</fullName>
        <ecNumber>7.2.2.8</ecNumber>
    </recommendedName>
    <alternativeName>
        <fullName>Copper-exporting P-type ATPase A</fullName>
    </alternativeName>
    <alternativeName>
        <fullName>Cu(+)-exporting ATPase</fullName>
    </alternativeName>
    <alternativeName>
        <fullName evidence="2">Soluble copper chaperone CopA(Z)</fullName>
    </alternativeName>
</protein>
<proteinExistence type="evidence at protein level"/>